<protein>
    <recommendedName>
        <fullName>Segregation and condensation protein A</fullName>
    </recommendedName>
</protein>
<dbReference type="EMBL" id="L09228">
    <property type="protein sequence ID" value="AAA67487.1"/>
    <property type="molecule type" value="Genomic_DNA"/>
</dbReference>
<dbReference type="EMBL" id="AL009126">
    <property type="protein sequence ID" value="CAB14254.1"/>
    <property type="molecule type" value="Genomic_DNA"/>
</dbReference>
<dbReference type="PIR" id="S45549">
    <property type="entry name" value="S45549"/>
</dbReference>
<dbReference type="RefSeq" id="NP_390203.1">
    <property type="nucleotide sequence ID" value="NC_000964.3"/>
</dbReference>
<dbReference type="RefSeq" id="WP_003246108.1">
    <property type="nucleotide sequence ID" value="NZ_OZ025638.1"/>
</dbReference>
<dbReference type="PDB" id="3ZGX">
    <property type="method" value="X-ray"/>
    <property type="resolution" value="3.40 A"/>
    <property type="chains" value="C/Z=1-86"/>
</dbReference>
<dbReference type="PDB" id="5H66">
    <property type="method" value="X-ray"/>
    <property type="resolution" value="1.82 A"/>
    <property type="chains" value="C=176-251"/>
</dbReference>
<dbReference type="PDB" id="5H67">
    <property type="method" value="X-ray"/>
    <property type="resolution" value="2.07 A"/>
    <property type="chains" value="C=176-251"/>
</dbReference>
<dbReference type="PDB" id="5XG3">
    <property type="method" value="X-ray"/>
    <property type="resolution" value="3.50 A"/>
    <property type="chains" value="C/D=167-251"/>
</dbReference>
<dbReference type="PDBsum" id="3ZGX"/>
<dbReference type="PDBsum" id="5H66"/>
<dbReference type="PDBsum" id="5H67"/>
<dbReference type="PDBsum" id="5XG3"/>
<dbReference type="SMR" id="P35154"/>
<dbReference type="DIP" id="DIP-52200N"/>
<dbReference type="FunCoup" id="P35154">
    <property type="interactions" value="532"/>
</dbReference>
<dbReference type="IntAct" id="P35154">
    <property type="interactions" value="15"/>
</dbReference>
<dbReference type="STRING" id="224308.BSU23220"/>
<dbReference type="PaxDb" id="224308-BSU23220"/>
<dbReference type="EnsemblBacteria" id="CAB14254">
    <property type="protein sequence ID" value="CAB14254"/>
    <property type="gene ID" value="BSU_23220"/>
</dbReference>
<dbReference type="GeneID" id="938950"/>
<dbReference type="KEGG" id="bsu:BSU23220"/>
<dbReference type="PATRIC" id="fig|224308.179.peg.2529"/>
<dbReference type="eggNOG" id="COG1354">
    <property type="taxonomic scope" value="Bacteria"/>
</dbReference>
<dbReference type="InParanoid" id="P35154"/>
<dbReference type="OrthoDB" id="9811016at2"/>
<dbReference type="PhylomeDB" id="P35154"/>
<dbReference type="BioCyc" id="BSUB:BSU23220-MONOMER"/>
<dbReference type="EvolutionaryTrace" id="P35154"/>
<dbReference type="Proteomes" id="UP000001570">
    <property type="component" value="Chromosome"/>
</dbReference>
<dbReference type="GO" id="GO:0005737">
    <property type="term" value="C:cytoplasm"/>
    <property type="evidence" value="ECO:0007669"/>
    <property type="project" value="UniProtKB-SubCell"/>
</dbReference>
<dbReference type="GO" id="GO:0042802">
    <property type="term" value="F:identical protein binding"/>
    <property type="evidence" value="ECO:0000353"/>
    <property type="project" value="IntAct"/>
</dbReference>
<dbReference type="GO" id="GO:0051301">
    <property type="term" value="P:cell division"/>
    <property type="evidence" value="ECO:0007669"/>
    <property type="project" value="UniProtKB-KW"/>
</dbReference>
<dbReference type="GO" id="GO:0007059">
    <property type="term" value="P:chromosome segregation"/>
    <property type="evidence" value="ECO:0007669"/>
    <property type="project" value="UniProtKB-UniRule"/>
</dbReference>
<dbReference type="GO" id="GO:0006260">
    <property type="term" value="P:DNA replication"/>
    <property type="evidence" value="ECO:0007669"/>
    <property type="project" value="UniProtKB-UniRule"/>
</dbReference>
<dbReference type="Gene3D" id="6.10.250.2410">
    <property type="match status" value="1"/>
</dbReference>
<dbReference type="Gene3D" id="1.10.10.580">
    <property type="entry name" value="Structural maintenance of chromosome 1. Chain E"/>
    <property type="match status" value="1"/>
</dbReference>
<dbReference type="HAMAP" id="MF_01805">
    <property type="entry name" value="ScpA"/>
    <property type="match status" value="1"/>
</dbReference>
<dbReference type="InterPro" id="IPR003768">
    <property type="entry name" value="ScpA"/>
</dbReference>
<dbReference type="InterPro" id="IPR023093">
    <property type="entry name" value="ScpA-like_C"/>
</dbReference>
<dbReference type="NCBIfam" id="NF000995">
    <property type="entry name" value="PRK00104.1-4"/>
    <property type="match status" value="1"/>
</dbReference>
<dbReference type="PANTHER" id="PTHR33969">
    <property type="entry name" value="SEGREGATION AND CONDENSATION PROTEIN A"/>
    <property type="match status" value="1"/>
</dbReference>
<dbReference type="PANTHER" id="PTHR33969:SF2">
    <property type="entry name" value="SEGREGATION AND CONDENSATION PROTEIN A"/>
    <property type="match status" value="1"/>
</dbReference>
<dbReference type="Pfam" id="PF02616">
    <property type="entry name" value="SMC_ScpA"/>
    <property type="match status" value="1"/>
</dbReference>
<reference key="1">
    <citation type="journal article" date="1993" name="Mol. Microbiol.">
        <title>The organization of the Bacillus subtilis 168 chromosome region between the spoVA and serA genetic loci, based on sequence data.</title>
        <authorList>
            <person name="Sorokin A.V."/>
            <person name="Zumstein E."/>
            <person name="Azevedo V."/>
            <person name="Ehrlich S.D."/>
            <person name="Serror P."/>
        </authorList>
    </citation>
    <scope>NUCLEOTIDE SEQUENCE [GENOMIC DNA]</scope>
    <source>
        <strain>168 / Marburg / ATCC 6051 / DSM 10 / JCM 1465 / NBRC 13719 / NCIMB 3610 / NRRL NRS-744 / VKM B-501</strain>
    </source>
</reference>
<reference key="2">
    <citation type="journal article" date="1997" name="Nature">
        <title>The complete genome sequence of the Gram-positive bacterium Bacillus subtilis.</title>
        <authorList>
            <person name="Kunst F."/>
            <person name="Ogasawara N."/>
            <person name="Moszer I."/>
            <person name="Albertini A.M."/>
            <person name="Alloni G."/>
            <person name="Azevedo V."/>
            <person name="Bertero M.G."/>
            <person name="Bessieres P."/>
            <person name="Bolotin A."/>
            <person name="Borchert S."/>
            <person name="Borriss R."/>
            <person name="Boursier L."/>
            <person name="Brans A."/>
            <person name="Braun M."/>
            <person name="Brignell S.C."/>
            <person name="Bron S."/>
            <person name="Brouillet S."/>
            <person name="Bruschi C.V."/>
            <person name="Caldwell B."/>
            <person name="Capuano V."/>
            <person name="Carter N.M."/>
            <person name="Choi S.-K."/>
            <person name="Codani J.-J."/>
            <person name="Connerton I.F."/>
            <person name="Cummings N.J."/>
            <person name="Daniel R.A."/>
            <person name="Denizot F."/>
            <person name="Devine K.M."/>
            <person name="Duesterhoeft A."/>
            <person name="Ehrlich S.D."/>
            <person name="Emmerson P.T."/>
            <person name="Entian K.-D."/>
            <person name="Errington J."/>
            <person name="Fabret C."/>
            <person name="Ferrari E."/>
            <person name="Foulger D."/>
            <person name="Fritz C."/>
            <person name="Fujita M."/>
            <person name="Fujita Y."/>
            <person name="Fuma S."/>
            <person name="Galizzi A."/>
            <person name="Galleron N."/>
            <person name="Ghim S.-Y."/>
            <person name="Glaser P."/>
            <person name="Goffeau A."/>
            <person name="Golightly E.J."/>
            <person name="Grandi G."/>
            <person name="Guiseppi G."/>
            <person name="Guy B.J."/>
            <person name="Haga K."/>
            <person name="Haiech J."/>
            <person name="Harwood C.R."/>
            <person name="Henaut A."/>
            <person name="Hilbert H."/>
            <person name="Holsappel S."/>
            <person name="Hosono S."/>
            <person name="Hullo M.-F."/>
            <person name="Itaya M."/>
            <person name="Jones L.-M."/>
            <person name="Joris B."/>
            <person name="Karamata D."/>
            <person name="Kasahara Y."/>
            <person name="Klaerr-Blanchard M."/>
            <person name="Klein C."/>
            <person name="Kobayashi Y."/>
            <person name="Koetter P."/>
            <person name="Koningstein G."/>
            <person name="Krogh S."/>
            <person name="Kumano M."/>
            <person name="Kurita K."/>
            <person name="Lapidus A."/>
            <person name="Lardinois S."/>
            <person name="Lauber J."/>
            <person name="Lazarevic V."/>
            <person name="Lee S.-M."/>
            <person name="Levine A."/>
            <person name="Liu H."/>
            <person name="Masuda S."/>
            <person name="Mauel C."/>
            <person name="Medigue C."/>
            <person name="Medina N."/>
            <person name="Mellado R.P."/>
            <person name="Mizuno M."/>
            <person name="Moestl D."/>
            <person name="Nakai S."/>
            <person name="Noback M."/>
            <person name="Noone D."/>
            <person name="O'Reilly M."/>
            <person name="Ogawa K."/>
            <person name="Ogiwara A."/>
            <person name="Oudega B."/>
            <person name="Park S.-H."/>
            <person name="Parro V."/>
            <person name="Pohl T.M."/>
            <person name="Portetelle D."/>
            <person name="Porwollik S."/>
            <person name="Prescott A.M."/>
            <person name="Presecan E."/>
            <person name="Pujic P."/>
            <person name="Purnelle B."/>
            <person name="Rapoport G."/>
            <person name="Rey M."/>
            <person name="Reynolds S."/>
            <person name="Rieger M."/>
            <person name="Rivolta C."/>
            <person name="Rocha E."/>
            <person name="Roche B."/>
            <person name="Rose M."/>
            <person name="Sadaie Y."/>
            <person name="Sato T."/>
            <person name="Scanlan E."/>
            <person name="Schleich S."/>
            <person name="Schroeter R."/>
            <person name="Scoffone F."/>
            <person name="Sekiguchi J."/>
            <person name="Sekowska A."/>
            <person name="Seror S.J."/>
            <person name="Serror P."/>
            <person name="Shin B.-S."/>
            <person name="Soldo B."/>
            <person name="Sorokin A."/>
            <person name="Tacconi E."/>
            <person name="Takagi T."/>
            <person name="Takahashi H."/>
            <person name="Takemaru K."/>
            <person name="Takeuchi M."/>
            <person name="Tamakoshi A."/>
            <person name="Tanaka T."/>
            <person name="Terpstra P."/>
            <person name="Tognoni A."/>
            <person name="Tosato V."/>
            <person name="Uchiyama S."/>
            <person name="Vandenbol M."/>
            <person name="Vannier F."/>
            <person name="Vassarotti A."/>
            <person name="Viari A."/>
            <person name="Wambutt R."/>
            <person name="Wedler E."/>
            <person name="Wedler H."/>
            <person name="Weitzenegger T."/>
            <person name="Winters P."/>
            <person name="Wipat A."/>
            <person name="Yamamoto H."/>
            <person name="Yamane K."/>
            <person name="Yasumoto K."/>
            <person name="Yata K."/>
            <person name="Yoshida K."/>
            <person name="Yoshikawa H.-F."/>
            <person name="Zumstein E."/>
            <person name="Yoshikawa H."/>
            <person name="Danchin A."/>
        </authorList>
    </citation>
    <scope>NUCLEOTIDE SEQUENCE [LARGE SCALE GENOMIC DNA]</scope>
    <source>
        <strain>168</strain>
    </source>
</reference>
<reference key="3">
    <citation type="journal article" date="2002" name="EMBO J.">
        <title>Cell cycle-dependent localization of two novel prokaryotic chromosome segregation and condensation proteins in Bacillus subtilis that interact with SMC protein.</title>
        <authorList>
            <person name="Mascarenhas J."/>
            <person name="Soppa J."/>
            <person name="Strunnikov A.V."/>
            <person name="Graumann P.L."/>
        </authorList>
    </citation>
    <scope>INTERACTION WITH SCPB AND SMC</scope>
</reference>
<reference key="4">
    <citation type="journal article" date="2002" name="Mol. Microbiol.">
        <title>Discovery of two novel families of proteins that are proposed to interact with prokaryotic SMC proteins, and characterization of the Bacillus subtilis family members ScpA and ScpB.</title>
        <authorList>
            <person name="Soppa J."/>
            <person name="Kobayashi K."/>
            <person name="Noirot-Gros M.-F."/>
            <person name="Oesterhelt D."/>
            <person name="Ehrlich S.D."/>
            <person name="Dervyn E."/>
            <person name="Ogasawara N."/>
            <person name="Moriya S."/>
        </authorList>
    </citation>
    <scope>CHARACTERIZATION</scope>
    <scope>INTERACTION WITH SCPB</scope>
</reference>
<reference key="5">
    <citation type="journal article" date="2003" name="Mol. Cell. Biol.">
        <title>A prokaryotic condensin/cohesin-like complex can actively compact chromosomes from a single position on the nucleoid and binds to DNA as a ring-like structure.</title>
        <authorList>
            <person name="Volkov A."/>
            <person name="Mascarenhas J."/>
            <person name="Andrei-Selmer C."/>
            <person name="Ulrich H.D."/>
            <person name="Graumann P.L."/>
        </authorList>
    </citation>
    <scope>SUBCELLULAR LOCATION</scope>
    <scope>HOMODIMERIZATION</scope>
    <scope>INTERACTION WITH SMC AND SCPB</scope>
</reference>
<comment type="function">
    <text>Participates in chromosomal partition during cell division. May act via the formation of a condensin-like complex containing Smc and ScpB that pull DNA away from mid-cell into both cell halves.</text>
</comment>
<comment type="subunit">
    <text>Component of a cohesin-like complex composed of ScpA, ScpB and the Smc homodimer, in which ScpA and ScpB bind to the head domain of Smc. The presence of the three proteins is required for the association of the complex with DNA.</text>
</comment>
<comment type="interaction">
    <interactant intactId="EBI-2121359">
        <id>P35154</id>
    </interactant>
    <interactant intactId="EBI-2121359">
        <id>P35154</id>
        <label>scpA</label>
    </interactant>
    <organismsDiffer>false</organismsDiffer>
    <experiments>4</experiments>
</comment>
<comment type="interaction">
    <interactant intactId="EBI-2121359">
        <id>P35154</id>
    </interactant>
    <interactant intactId="EBI-2121445">
        <id>P35155</id>
        <label>scpB</label>
    </interactant>
    <organismsDiffer>false</organismsDiffer>
    <experiments>5</experiments>
</comment>
<comment type="interaction">
    <interactant intactId="EBI-2121359">
        <id>P35154</id>
    </interactant>
    <interactant intactId="EBI-2121372">
        <id>P51834</id>
        <label>smc</label>
    </interactant>
    <organismsDiffer>false</organismsDiffer>
    <experiments>20</experiments>
</comment>
<comment type="subcellular location">
    <subcellularLocation>
        <location evidence="1">Cytoplasm</location>
    </subcellularLocation>
    <text>Associated with two foci at the outer edges of the nucleoid region in young cells, and at four foci within both cell halves in older cells.</text>
</comment>
<comment type="similarity">
    <text evidence="2">Belongs to the ScpA family.</text>
</comment>
<evidence type="ECO:0000269" key="1">
    <source>
    </source>
</evidence>
<evidence type="ECO:0000305" key="2"/>
<evidence type="ECO:0007829" key="3">
    <source>
        <dbReference type="PDB" id="3ZGX"/>
    </source>
</evidence>
<evidence type="ECO:0007829" key="4">
    <source>
        <dbReference type="PDB" id="5H66"/>
    </source>
</evidence>
<organism>
    <name type="scientific">Bacillus subtilis (strain 168)</name>
    <dbReference type="NCBI Taxonomy" id="224308"/>
    <lineage>
        <taxon>Bacteria</taxon>
        <taxon>Bacillati</taxon>
        <taxon>Bacillota</taxon>
        <taxon>Bacilli</taxon>
        <taxon>Bacillales</taxon>
        <taxon>Bacillaceae</taxon>
        <taxon>Bacillus</taxon>
    </lineage>
</organism>
<gene>
    <name type="primary">scpA</name>
    <name type="synonym">ypuG</name>
    <name type="ordered locus">BSU23220</name>
</gene>
<name>SCPA_BACSU</name>
<keyword id="KW-0002">3D-structure</keyword>
<keyword id="KW-0131">Cell cycle</keyword>
<keyword id="KW-0132">Cell division</keyword>
<keyword id="KW-0159">Chromosome partition</keyword>
<keyword id="KW-0963">Cytoplasm</keyword>
<keyword id="KW-1185">Reference proteome</keyword>
<proteinExistence type="evidence at protein level"/>
<feature type="chain" id="PRO_0000211080" description="Segregation and condensation protein A">
    <location>
        <begin position="1"/>
        <end position="251"/>
    </location>
</feature>
<feature type="helix" evidence="3">
    <location>
        <begin position="14"/>
        <end position="29"/>
    </location>
</feature>
<feature type="strand" evidence="3">
    <location>
        <begin position="31"/>
        <end position="34"/>
    </location>
</feature>
<feature type="helix" evidence="3">
    <location>
        <begin position="39"/>
        <end position="73"/>
    </location>
</feature>
<feature type="helix" evidence="4">
    <location>
        <begin position="182"/>
        <end position="194"/>
    </location>
</feature>
<feature type="helix" evidence="4">
    <location>
        <begin position="201"/>
        <end position="203"/>
    </location>
</feature>
<feature type="strand" evidence="4">
    <location>
        <begin position="204"/>
        <end position="207"/>
    </location>
</feature>
<feature type="helix" evidence="4">
    <location>
        <begin position="210"/>
        <end position="225"/>
    </location>
</feature>
<feature type="strand" evidence="4">
    <location>
        <begin position="229"/>
        <end position="235"/>
    </location>
</feature>
<feature type="strand" evidence="4">
    <location>
        <begin position="240"/>
        <end position="244"/>
    </location>
</feature>
<sequence>MEEYQVKIDTFEGPLDLLLHLINRLEIDIYDIPVAKITEQYLLYVHTMRVLELDIASEYLVMAATLLSIKSRMLLPKQEEELFEDELLEEEDPREELIEKLIEYRKYKDAAKDLKEREEERQKSFTKPPSDLSEYAKEVKQSEQKLSVTVYDMIGAFQKVLKRKKINRPMETTITRQDIPIEARMNEIVHSLKSRGTRINFMDLFPYEQKEHLVVTFLAVLELMKNQLVLIEQEHNFSDIYITGSESIHGA</sequence>
<accession>P35154</accession>